<accession>Q30TV9</accession>
<dbReference type="EMBL" id="CP000153">
    <property type="protein sequence ID" value="ABB43572.1"/>
    <property type="molecule type" value="Genomic_DNA"/>
</dbReference>
<dbReference type="RefSeq" id="WP_011371927.1">
    <property type="nucleotide sequence ID" value="NC_007575.1"/>
</dbReference>
<dbReference type="SMR" id="Q30TV9"/>
<dbReference type="STRING" id="326298.Suden_0291"/>
<dbReference type="KEGG" id="tdn:Suden_0291"/>
<dbReference type="eggNOG" id="COG0091">
    <property type="taxonomic scope" value="Bacteria"/>
</dbReference>
<dbReference type="HOGENOM" id="CLU_083987_3_3_7"/>
<dbReference type="OrthoDB" id="9805969at2"/>
<dbReference type="Proteomes" id="UP000002714">
    <property type="component" value="Chromosome"/>
</dbReference>
<dbReference type="GO" id="GO:0022625">
    <property type="term" value="C:cytosolic large ribosomal subunit"/>
    <property type="evidence" value="ECO:0007669"/>
    <property type="project" value="TreeGrafter"/>
</dbReference>
<dbReference type="GO" id="GO:0019843">
    <property type="term" value="F:rRNA binding"/>
    <property type="evidence" value="ECO:0007669"/>
    <property type="project" value="UniProtKB-UniRule"/>
</dbReference>
<dbReference type="GO" id="GO:0003735">
    <property type="term" value="F:structural constituent of ribosome"/>
    <property type="evidence" value="ECO:0007669"/>
    <property type="project" value="InterPro"/>
</dbReference>
<dbReference type="GO" id="GO:0006412">
    <property type="term" value="P:translation"/>
    <property type="evidence" value="ECO:0007669"/>
    <property type="project" value="UniProtKB-UniRule"/>
</dbReference>
<dbReference type="CDD" id="cd00336">
    <property type="entry name" value="Ribosomal_L22"/>
    <property type="match status" value="1"/>
</dbReference>
<dbReference type="Gene3D" id="3.90.470.10">
    <property type="entry name" value="Ribosomal protein L22/L17"/>
    <property type="match status" value="1"/>
</dbReference>
<dbReference type="HAMAP" id="MF_01331_B">
    <property type="entry name" value="Ribosomal_uL22_B"/>
    <property type="match status" value="1"/>
</dbReference>
<dbReference type="InterPro" id="IPR001063">
    <property type="entry name" value="Ribosomal_uL22"/>
</dbReference>
<dbReference type="InterPro" id="IPR005727">
    <property type="entry name" value="Ribosomal_uL22_bac/chlpt-type"/>
</dbReference>
<dbReference type="InterPro" id="IPR047867">
    <property type="entry name" value="Ribosomal_uL22_bac/org-type"/>
</dbReference>
<dbReference type="InterPro" id="IPR036394">
    <property type="entry name" value="Ribosomal_uL22_sf"/>
</dbReference>
<dbReference type="NCBIfam" id="TIGR01044">
    <property type="entry name" value="rplV_bact"/>
    <property type="match status" value="1"/>
</dbReference>
<dbReference type="PANTHER" id="PTHR13501">
    <property type="entry name" value="CHLOROPLAST 50S RIBOSOMAL PROTEIN L22-RELATED"/>
    <property type="match status" value="1"/>
</dbReference>
<dbReference type="PANTHER" id="PTHR13501:SF8">
    <property type="entry name" value="LARGE RIBOSOMAL SUBUNIT PROTEIN UL22M"/>
    <property type="match status" value="1"/>
</dbReference>
<dbReference type="Pfam" id="PF00237">
    <property type="entry name" value="Ribosomal_L22"/>
    <property type="match status" value="1"/>
</dbReference>
<dbReference type="SUPFAM" id="SSF54843">
    <property type="entry name" value="Ribosomal protein L22"/>
    <property type="match status" value="1"/>
</dbReference>
<protein>
    <recommendedName>
        <fullName evidence="1">Large ribosomal subunit protein uL22</fullName>
    </recommendedName>
    <alternativeName>
        <fullName evidence="2">50S ribosomal protein L22</fullName>
    </alternativeName>
</protein>
<organism>
    <name type="scientific">Sulfurimonas denitrificans (strain ATCC 33889 / DSM 1251)</name>
    <name type="common">Thiomicrospira denitrificans (strain ATCC 33889 / DSM 1251)</name>
    <dbReference type="NCBI Taxonomy" id="326298"/>
    <lineage>
        <taxon>Bacteria</taxon>
        <taxon>Pseudomonadati</taxon>
        <taxon>Campylobacterota</taxon>
        <taxon>Epsilonproteobacteria</taxon>
        <taxon>Campylobacterales</taxon>
        <taxon>Sulfurimonadaceae</taxon>
        <taxon>Sulfurimonas</taxon>
    </lineage>
</organism>
<evidence type="ECO:0000255" key="1">
    <source>
        <dbReference type="HAMAP-Rule" id="MF_01331"/>
    </source>
</evidence>
<evidence type="ECO:0000305" key="2"/>
<proteinExistence type="inferred from homology"/>
<keyword id="KW-1185">Reference proteome</keyword>
<keyword id="KW-0687">Ribonucleoprotein</keyword>
<keyword id="KW-0689">Ribosomal protein</keyword>
<keyword id="KW-0694">RNA-binding</keyword>
<keyword id="KW-0699">rRNA-binding</keyword>
<reference key="1">
    <citation type="journal article" date="2008" name="Appl. Environ. Microbiol.">
        <title>Genome of the epsilonproteobacterial chemolithoautotroph Sulfurimonas denitrificans.</title>
        <authorList>
            <person name="Sievert S.M."/>
            <person name="Scott K.M."/>
            <person name="Klotz M.G."/>
            <person name="Chain P.S.G."/>
            <person name="Hauser L.J."/>
            <person name="Hemp J."/>
            <person name="Huegler M."/>
            <person name="Land M."/>
            <person name="Lapidus A."/>
            <person name="Larimer F.W."/>
            <person name="Lucas S."/>
            <person name="Malfatti S.A."/>
            <person name="Meyer F."/>
            <person name="Paulsen I.T."/>
            <person name="Ren Q."/>
            <person name="Simon J."/>
            <person name="Bailey K."/>
            <person name="Diaz E."/>
            <person name="Fitzpatrick K.A."/>
            <person name="Glover B."/>
            <person name="Gwatney N."/>
            <person name="Korajkic A."/>
            <person name="Long A."/>
            <person name="Mobberley J.M."/>
            <person name="Pantry S.N."/>
            <person name="Pazder G."/>
            <person name="Peterson S."/>
            <person name="Quintanilla J.D."/>
            <person name="Sprinkle R."/>
            <person name="Stephens J."/>
            <person name="Thomas P."/>
            <person name="Vaughn R."/>
            <person name="Weber M.J."/>
            <person name="Wooten L.L."/>
        </authorList>
    </citation>
    <scope>NUCLEOTIDE SEQUENCE [LARGE SCALE GENOMIC DNA]</scope>
    <source>
        <strain>ATCC 33889 / DSM 1251</strain>
    </source>
</reference>
<name>RL22_SULDN</name>
<sequence>MARALLKFIRVSPIKSRLIAREIQGMNAELALASLEFTPNKAAKIIAKVVASAVANSGNEAADCIVTSCRVDNGPVLKRFRPRARGMASGIRKPTAHILVEVEGK</sequence>
<gene>
    <name evidence="1" type="primary">rplV</name>
    <name type="ordered locus">Suden_0291</name>
</gene>
<comment type="function">
    <text evidence="1">This protein binds specifically to 23S rRNA; its binding is stimulated by other ribosomal proteins, e.g. L4, L17, and L20. It is important during the early stages of 50S assembly. It makes multiple contacts with different domains of the 23S rRNA in the assembled 50S subunit and ribosome (By similarity).</text>
</comment>
<comment type="function">
    <text evidence="1">The globular domain of the protein is located near the polypeptide exit tunnel on the outside of the subunit, while an extended beta-hairpin is found that lines the wall of the exit tunnel in the center of the 70S ribosome.</text>
</comment>
<comment type="subunit">
    <text evidence="1">Part of the 50S ribosomal subunit.</text>
</comment>
<comment type="similarity">
    <text evidence="1">Belongs to the universal ribosomal protein uL22 family.</text>
</comment>
<feature type="chain" id="PRO_0000243225" description="Large ribosomal subunit protein uL22">
    <location>
        <begin position="1"/>
        <end position="105"/>
    </location>
</feature>